<dbReference type="EC" id="3.4.13.9" evidence="1"/>
<dbReference type="EMBL" id="CU928164">
    <property type="protein sequence ID" value="CAR19267.1"/>
    <property type="molecule type" value="Genomic_DNA"/>
</dbReference>
<dbReference type="RefSeq" id="WP_000444546.1">
    <property type="nucleotide sequence ID" value="NC_011750.1"/>
</dbReference>
<dbReference type="RefSeq" id="YP_002409077.1">
    <property type="nucleotide sequence ID" value="NC_011750.1"/>
</dbReference>
<dbReference type="SMR" id="B7NV19"/>
<dbReference type="STRING" id="585057.ECIAI39_3148"/>
<dbReference type="MEROPS" id="M24.003"/>
<dbReference type="KEGG" id="ect:ECIAI39_3148"/>
<dbReference type="PATRIC" id="fig|585057.6.peg.3269"/>
<dbReference type="HOGENOM" id="CLU_050675_0_0_6"/>
<dbReference type="Proteomes" id="UP000000749">
    <property type="component" value="Chromosome"/>
</dbReference>
<dbReference type="GO" id="GO:0005829">
    <property type="term" value="C:cytosol"/>
    <property type="evidence" value="ECO:0007669"/>
    <property type="project" value="TreeGrafter"/>
</dbReference>
<dbReference type="GO" id="GO:0004177">
    <property type="term" value="F:aminopeptidase activity"/>
    <property type="evidence" value="ECO:0007669"/>
    <property type="project" value="TreeGrafter"/>
</dbReference>
<dbReference type="GO" id="GO:0046872">
    <property type="term" value="F:metal ion binding"/>
    <property type="evidence" value="ECO:0007669"/>
    <property type="project" value="UniProtKB-KW"/>
</dbReference>
<dbReference type="GO" id="GO:0008235">
    <property type="term" value="F:metalloexopeptidase activity"/>
    <property type="evidence" value="ECO:0007669"/>
    <property type="project" value="UniProtKB-UniRule"/>
</dbReference>
<dbReference type="GO" id="GO:0016795">
    <property type="term" value="F:phosphoric triester hydrolase activity"/>
    <property type="evidence" value="ECO:0007669"/>
    <property type="project" value="InterPro"/>
</dbReference>
<dbReference type="GO" id="GO:0102009">
    <property type="term" value="F:proline dipeptidase activity"/>
    <property type="evidence" value="ECO:0007669"/>
    <property type="project" value="UniProtKB-EC"/>
</dbReference>
<dbReference type="GO" id="GO:0006508">
    <property type="term" value="P:proteolysis"/>
    <property type="evidence" value="ECO:0007669"/>
    <property type="project" value="UniProtKB-KW"/>
</dbReference>
<dbReference type="CDD" id="cd01087">
    <property type="entry name" value="Prolidase"/>
    <property type="match status" value="1"/>
</dbReference>
<dbReference type="FunFam" id="3.40.350.10:FF:000002">
    <property type="entry name" value="Xaa-Pro dipeptidase"/>
    <property type="match status" value="1"/>
</dbReference>
<dbReference type="FunFam" id="3.90.230.10:FF:000006">
    <property type="entry name" value="Xaa-Pro dipeptidase"/>
    <property type="match status" value="1"/>
</dbReference>
<dbReference type="Gene3D" id="3.90.230.10">
    <property type="entry name" value="Creatinase/methionine aminopeptidase superfamily"/>
    <property type="match status" value="1"/>
</dbReference>
<dbReference type="Gene3D" id="3.40.350.10">
    <property type="entry name" value="Creatinase/prolidase N-terminal domain"/>
    <property type="match status" value="1"/>
</dbReference>
<dbReference type="HAMAP" id="MF_01279">
    <property type="entry name" value="X_Pro_dipeptid"/>
    <property type="match status" value="1"/>
</dbReference>
<dbReference type="InterPro" id="IPR029149">
    <property type="entry name" value="Creatin/AminoP/Spt16_N"/>
</dbReference>
<dbReference type="InterPro" id="IPR036005">
    <property type="entry name" value="Creatinase/aminopeptidase-like"/>
</dbReference>
<dbReference type="InterPro" id="IPR048819">
    <property type="entry name" value="PepQ_N"/>
</dbReference>
<dbReference type="InterPro" id="IPR000994">
    <property type="entry name" value="Pept_M24"/>
</dbReference>
<dbReference type="InterPro" id="IPR001131">
    <property type="entry name" value="Peptidase_M24B_aminopep-P_CS"/>
</dbReference>
<dbReference type="InterPro" id="IPR052433">
    <property type="entry name" value="X-Pro_dipept-like"/>
</dbReference>
<dbReference type="InterPro" id="IPR022846">
    <property type="entry name" value="X_Pro_dipept"/>
</dbReference>
<dbReference type="NCBIfam" id="NF010133">
    <property type="entry name" value="PRK13607.1"/>
    <property type="match status" value="1"/>
</dbReference>
<dbReference type="PANTHER" id="PTHR43226">
    <property type="entry name" value="XAA-PRO AMINOPEPTIDASE 3"/>
    <property type="match status" value="1"/>
</dbReference>
<dbReference type="PANTHER" id="PTHR43226:SF8">
    <property type="entry name" value="XAA-PRO DIPEPTIDASE"/>
    <property type="match status" value="1"/>
</dbReference>
<dbReference type="Pfam" id="PF21216">
    <property type="entry name" value="PepQ_N"/>
    <property type="match status" value="1"/>
</dbReference>
<dbReference type="Pfam" id="PF00557">
    <property type="entry name" value="Peptidase_M24"/>
    <property type="match status" value="1"/>
</dbReference>
<dbReference type="SUPFAM" id="SSF55920">
    <property type="entry name" value="Creatinase/aminopeptidase"/>
    <property type="match status" value="1"/>
</dbReference>
<dbReference type="PROSITE" id="PS00491">
    <property type="entry name" value="PROLINE_PEPTIDASE"/>
    <property type="match status" value="1"/>
</dbReference>
<protein>
    <recommendedName>
        <fullName evidence="1">Xaa-Pro dipeptidase</fullName>
        <shortName evidence="1">X-Pro dipeptidase</shortName>
        <ecNumber evidence="1">3.4.13.9</ecNumber>
    </recommendedName>
    <alternativeName>
        <fullName evidence="1">Imidodipeptidase</fullName>
    </alternativeName>
    <alternativeName>
        <fullName evidence="1">Proline dipeptidase</fullName>
        <shortName evidence="1">Prolidase</shortName>
    </alternativeName>
</protein>
<keyword id="KW-0224">Dipeptidase</keyword>
<keyword id="KW-0378">Hydrolase</keyword>
<keyword id="KW-0464">Manganese</keyword>
<keyword id="KW-0479">Metal-binding</keyword>
<keyword id="KW-0482">Metalloprotease</keyword>
<keyword id="KW-0645">Protease</keyword>
<comment type="function">
    <text evidence="1">Splits dipeptides with a prolyl residue in the C-terminal position.</text>
</comment>
<comment type="catalytic activity">
    <reaction evidence="1">
        <text>Xaa-L-Pro dipeptide + H2O = an L-alpha-amino acid + L-proline</text>
        <dbReference type="Rhea" id="RHEA:76407"/>
        <dbReference type="ChEBI" id="CHEBI:15377"/>
        <dbReference type="ChEBI" id="CHEBI:59869"/>
        <dbReference type="ChEBI" id="CHEBI:60039"/>
        <dbReference type="ChEBI" id="CHEBI:195196"/>
        <dbReference type="EC" id="3.4.13.9"/>
    </reaction>
</comment>
<comment type="cofactor">
    <cofactor evidence="1">
        <name>Mn(2+)</name>
        <dbReference type="ChEBI" id="CHEBI:29035"/>
    </cofactor>
    <text evidence="1">Binds 2 manganese ions per subunit.</text>
</comment>
<comment type="similarity">
    <text evidence="1">Belongs to the peptidase M24B family. Bacterial-type prolidase subfamily.</text>
</comment>
<gene>
    <name evidence="1" type="primary">pepQ</name>
    <name type="ordered locus">ECIAI39_3148</name>
</gene>
<name>PEPQ_ECO7I</name>
<evidence type="ECO:0000255" key="1">
    <source>
        <dbReference type="HAMAP-Rule" id="MF_01279"/>
    </source>
</evidence>
<organism>
    <name type="scientific">Escherichia coli O7:K1 (strain IAI39 / ExPEC)</name>
    <dbReference type="NCBI Taxonomy" id="585057"/>
    <lineage>
        <taxon>Bacteria</taxon>
        <taxon>Pseudomonadati</taxon>
        <taxon>Pseudomonadota</taxon>
        <taxon>Gammaproteobacteria</taxon>
        <taxon>Enterobacterales</taxon>
        <taxon>Enterobacteriaceae</taxon>
        <taxon>Escherichia</taxon>
    </lineage>
</organism>
<sequence length="443" mass="50162">MESLASLYKNHIATLQERTRDALARFKLDALLIHSGELFNVFLDDHPYPFKVNPQFKAWVPVTQVPNCWLLVDGVNKPKLWFYLPVDYWHNVEPLPNSFWTEDVEVIALPKADGIGSLLPAARGNIGYIGPVPERALQLGIEASNINPKGVIDYLHYYRSFKTEYELACMREAQKMAVNGHRAAEEAFRSGMSEFDINIAYLTATGHRDTDVPYSNIVALNEHAAVLHYTKLDHQAPEEMRSFLLDAGAEYNGYAADLTRTWSAKSDNDYAQLVKDVNDEQLALIATMKAGVSYVDYHIQFHQRIAKLLRKHQIITDMSEEAMVENDLTGPFMPHGIGHPLGLQVHDVAGFMQDDSGTHLAAPAKYPYLRCTRILQPGMVLTIEPGIYFIESLLAPWREGQFSKHFNWQKIEALKPFGGIRIEDNVVIHENSVENMTRDLKLA</sequence>
<accession>B7NV19</accession>
<reference key="1">
    <citation type="journal article" date="2009" name="PLoS Genet.">
        <title>Organised genome dynamics in the Escherichia coli species results in highly diverse adaptive paths.</title>
        <authorList>
            <person name="Touchon M."/>
            <person name="Hoede C."/>
            <person name="Tenaillon O."/>
            <person name="Barbe V."/>
            <person name="Baeriswyl S."/>
            <person name="Bidet P."/>
            <person name="Bingen E."/>
            <person name="Bonacorsi S."/>
            <person name="Bouchier C."/>
            <person name="Bouvet O."/>
            <person name="Calteau A."/>
            <person name="Chiapello H."/>
            <person name="Clermont O."/>
            <person name="Cruveiller S."/>
            <person name="Danchin A."/>
            <person name="Diard M."/>
            <person name="Dossat C."/>
            <person name="Karoui M.E."/>
            <person name="Frapy E."/>
            <person name="Garry L."/>
            <person name="Ghigo J.M."/>
            <person name="Gilles A.M."/>
            <person name="Johnson J."/>
            <person name="Le Bouguenec C."/>
            <person name="Lescat M."/>
            <person name="Mangenot S."/>
            <person name="Martinez-Jehanne V."/>
            <person name="Matic I."/>
            <person name="Nassif X."/>
            <person name="Oztas S."/>
            <person name="Petit M.A."/>
            <person name="Pichon C."/>
            <person name="Rouy Z."/>
            <person name="Ruf C.S."/>
            <person name="Schneider D."/>
            <person name="Tourret J."/>
            <person name="Vacherie B."/>
            <person name="Vallenet D."/>
            <person name="Medigue C."/>
            <person name="Rocha E.P.C."/>
            <person name="Denamur E."/>
        </authorList>
    </citation>
    <scope>NUCLEOTIDE SEQUENCE [LARGE SCALE GENOMIC DNA]</scope>
    <source>
        <strain>IAI39 / ExPEC</strain>
    </source>
</reference>
<proteinExistence type="inferred from homology"/>
<feature type="chain" id="PRO_1000140313" description="Xaa-Pro dipeptidase">
    <location>
        <begin position="1"/>
        <end position="443"/>
    </location>
</feature>
<feature type="binding site" evidence="1">
    <location>
        <position position="246"/>
    </location>
    <ligand>
        <name>Mn(2+)</name>
        <dbReference type="ChEBI" id="CHEBI:29035"/>
        <label>2</label>
    </ligand>
</feature>
<feature type="binding site" evidence="1">
    <location>
        <position position="257"/>
    </location>
    <ligand>
        <name>Mn(2+)</name>
        <dbReference type="ChEBI" id="CHEBI:29035"/>
        <label>1</label>
    </ligand>
</feature>
<feature type="binding site" evidence="1">
    <location>
        <position position="257"/>
    </location>
    <ligand>
        <name>Mn(2+)</name>
        <dbReference type="ChEBI" id="CHEBI:29035"/>
        <label>2</label>
    </ligand>
</feature>
<feature type="binding site" evidence="1">
    <location>
        <position position="339"/>
    </location>
    <ligand>
        <name>Mn(2+)</name>
        <dbReference type="ChEBI" id="CHEBI:29035"/>
        <label>1</label>
    </ligand>
</feature>
<feature type="binding site" evidence="1">
    <location>
        <position position="384"/>
    </location>
    <ligand>
        <name>Mn(2+)</name>
        <dbReference type="ChEBI" id="CHEBI:29035"/>
        <label>1</label>
    </ligand>
</feature>
<feature type="binding site" evidence="1">
    <location>
        <position position="423"/>
    </location>
    <ligand>
        <name>Mn(2+)</name>
        <dbReference type="ChEBI" id="CHEBI:29035"/>
        <label>1</label>
    </ligand>
</feature>
<feature type="binding site" evidence="1">
    <location>
        <position position="423"/>
    </location>
    <ligand>
        <name>Mn(2+)</name>
        <dbReference type="ChEBI" id="CHEBI:29035"/>
        <label>2</label>
    </ligand>
</feature>